<feature type="chain" id="PRO_0000420349" description="3-methylornithine synthase">
    <location>
        <begin position="1"/>
        <end position="350"/>
    </location>
</feature>
<feature type="domain" description="Radical SAM core" evidence="1">
    <location>
        <begin position="57"/>
        <end position="279"/>
    </location>
</feature>
<feature type="binding site" evidence="2 10">
    <location>
        <position position="71"/>
    </location>
    <ligand>
        <name>[4Fe-4S] cluster</name>
        <dbReference type="ChEBI" id="CHEBI:49883"/>
        <note>4Fe-4S-S-AdoMet</note>
    </ligand>
</feature>
<feature type="binding site" evidence="2 10">
    <location>
        <position position="75"/>
    </location>
    <ligand>
        <name>[4Fe-4S] cluster</name>
        <dbReference type="ChEBI" id="CHEBI:49883"/>
        <note>4Fe-4S-S-AdoMet</note>
    </ligand>
</feature>
<feature type="binding site" evidence="2 10">
    <location>
        <position position="77"/>
    </location>
    <ligand>
        <name>S-adenosyl-L-methionine</name>
        <dbReference type="ChEBI" id="CHEBI:59789"/>
    </ligand>
</feature>
<feature type="binding site" evidence="2 10">
    <location>
        <position position="78"/>
    </location>
    <ligand>
        <name>[4Fe-4S] cluster</name>
        <dbReference type="ChEBI" id="CHEBI:49883"/>
        <note>4Fe-4S-S-AdoMet</note>
    </ligand>
</feature>
<feature type="binding site" evidence="2 10">
    <location>
        <position position="112"/>
    </location>
    <ligand>
        <name>(3R)-3-methyl-D-ornithine</name>
        <dbReference type="ChEBI" id="CHEBI:64642"/>
    </ligand>
</feature>
<feature type="binding site" evidence="2 10">
    <location>
        <position position="146"/>
    </location>
    <ligand>
        <name>(3R)-3-methyl-D-ornithine</name>
        <dbReference type="ChEBI" id="CHEBI:64642"/>
    </ligand>
</feature>
<feature type="binding site" evidence="2 10">
    <location>
        <position position="169"/>
    </location>
    <ligand>
        <name>(3R)-3-methyl-D-ornithine</name>
        <dbReference type="ChEBI" id="CHEBI:64642"/>
    </ligand>
</feature>
<feature type="binding site" evidence="2 10">
    <location>
        <position position="171"/>
    </location>
    <ligand>
        <name>S-adenosyl-L-methionine</name>
        <dbReference type="ChEBI" id="CHEBI:59789"/>
    </ligand>
</feature>
<feature type="binding site" evidence="2 10">
    <location>
        <position position="182"/>
    </location>
    <ligand>
        <name>S-adenosyl-L-methionine</name>
        <dbReference type="ChEBI" id="CHEBI:59789"/>
    </ligand>
</feature>
<feature type="binding site" evidence="2 10">
    <location>
        <position position="190"/>
    </location>
    <ligand>
        <name>S-adenosyl-L-methionine</name>
        <dbReference type="ChEBI" id="CHEBI:59789"/>
    </ligand>
</feature>
<feature type="binding site" evidence="2 10">
    <location>
        <position position="235"/>
    </location>
    <ligand>
        <name>(3R)-3-methyl-D-ornithine</name>
        <dbReference type="ChEBI" id="CHEBI:64642"/>
    </ligand>
</feature>
<feature type="binding site" evidence="2 10">
    <location>
        <position position="240"/>
    </location>
    <ligand>
        <name>S-adenosyl-L-methionine</name>
        <dbReference type="ChEBI" id="CHEBI:59789"/>
    </ligand>
</feature>
<feature type="binding site" evidence="2 10">
    <location>
        <position position="242"/>
    </location>
    <ligand>
        <name>S-adenosyl-L-methionine</name>
        <dbReference type="ChEBI" id="CHEBI:59789"/>
    </ligand>
</feature>
<feature type="binding site" evidence="2 10">
    <location>
        <position position="277"/>
    </location>
    <ligand>
        <name>(3R)-3-methyl-D-ornithine</name>
        <dbReference type="ChEBI" id="CHEBI:64642"/>
    </ligand>
</feature>
<feature type="binding site" evidence="2 10">
    <location>
        <position position="298"/>
    </location>
    <ligand>
        <name>(3R)-3-methyl-D-ornithine</name>
        <dbReference type="ChEBI" id="CHEBI:64642"/>
    </ligand>
</feature>
<feature type="binding site" evidence="2 10">
    <location>
        <position position="299"/>
    </location>
    <ligand>
        <name>(3R)-3-methyl-D-ornithine</name>
        <dbReference type="ChEBI" id="CHEBI:64642"/>
    </ligand>
</feature>
<feature type="helix" evidence="11">
    <location>
        <begin position="13"/>
        <end position="18"/>
    </location>
</feature>
<feature type="helix" evidence="11">
    <location>
        <begin position="25"/>
        <end position="32"/>
    </location>
</feature>
<feature type="helix" evidence="11">
    <location>
        <begin position="37"/>
        <end position="55"/>
    </location>
</feature>
<feature type="strand" evidence="11">
    <location>
        <begin position="58"/>
        <end position="68"/>
    </location>
</feature>
<feature type="helix" evidence="11">
    <location>
        <begin position="93"/>
        <end position="103"/>
    </location>
</feature>
<feature type="strand" evidence="11">
    <location>
        <begin position="109"/>
        <end position="115"/>
    </location>
</feature>
<feature type="helix" evidence="11">
    <location>
        <begin position="119"/>
        <end position="123"/>
    </location>
</feature>
<feature type="helix" evidence="11">
    <location>
        <begin position="126"/>
        <end position="139"/>
    </location>
</feature>
<feature type="strand" evidence="11">
    <location>
        <begin position="143"/>
        <end position="146"/>
    </location>
</feature>
<feature type="helix" evidence="11">
    <location>
        <begin position="152"/>
        <end position="160"/>
    </location>
</feature>
<feature type="strand" evidence="11">
    <location>
        <begin position="163"/>
        <end position="167"/>
    </location>
</feature>
<feature type="helix" evidence="11">
    <location>
        <begin position="175"/>
        <end position="181"/>
    </location>
</feature>
<feature type="helix" evidence="11">
    <location>
        <begin position="187"/>
        <end position="199"/>
    </location>
</feature>
<feature type="strand" evidence="11">
    <location>
        <begin position="203"/>
        <end position="213"/>
    </location>
</feature>
<feature type="helix" evidence="11">
    <location>
        <begin position="216"/>
        <end position="228"/>
    </location>
</feature>
<feature type="strand" evidence="11">
    <location>
        <begin position="232"/>
        <end position="238"/>
    </location>
</feature>
<feature type="turn" evidence="11">
    <location>
        <begin position="246"/>
        <end position="249"/>
    </location>
</feature>
<feature type="helix" evidence="11">
    <location>
        <begin position="258"/>
        <end position="268"/>
    </location>
</feature>
<feature type="strand" evidence="11">
    <location>
        <begin position="275"/>
        <end position="277"/>
    </location>
</feature>
<feature type="helix" evidence="11">
    <location>
        <begin position="278"/>
        <end position="291"/>
    </location>
</feature>
<feature type="strand" evidence="11">
    <location>
        <begin position="296"/>
        <end position="300"/>
    </location>
</feature>
<feature type="turn" evidence="11">
    <location>
        <begin position="313"/>
        <end position="316"/>
    </location>
</feature>
<feature type="helix" evidence="11">
    <location>
        <begin position="324"/>
        <end position="334"/>
    </location>
</feature>
<feature type="helix" evidence="11">
    <location>
        <begin position="341"/>
        <end position="345"/>
    </location>
</feature>
<comment type="function">
    <text evidence="3 7 8">Catalyzes the isomerization of L-lysine to (3R)-3-methyl-D-ornithine via a radical-based mechanism, a step in the biosynthesis pathway of pyrrolysine (Probable) (PubMed:38426440). Also catalyzes the reverse reaction in vitro, converting (3R)-3-methyl-D-ornithine into L-lysine (PubMed:38426440).</text>
</comment>
<comment type="catalytic activity">
    <reaction evidence="3">
        <text>L-lysine = (3R)-3-methyl-D-ornithine</text>
        <dbReference type="Rhea" id="RHEA:32759"/>
        <dbReference type="ChEBI" id="CHEBI:32551"/>
        <dbReference type="ChEBI" id="CHEBI:64642"/>
        <dbReference type="EC" id="5.4.99.58"/>
    </reaction>
    <physiologicalReaction direction="left-to-right" evidence="9">
        <dbReference type="Rhea" id="RHEA:32760"/>
    </physiologicalReaction>
</comment>
<comment type="cofactor">
    <cofactor evidence="2 3">
        <name>[4Fe-4S] cluster</name>
        <dbReference type="ChEBI" id="CHEBI:49883"/>
    </cofactor>
    <text evidence="2">Binds 1 [4Fe-4S] cluster. The cluster is coordinated with 3 cysteines and an exchangeable S-adenosyl-L-methionine.</text>
</comment>
<comment type="cofactor">
    <cofactor evidence="2 3">
        <name>S-adenosyl-L-methionine</name>
        <dbReference type="ChEBI" id="CHEBI:59789"/>
    </cofactor>
    <text evidence="2">Binds 1 S-adenosyl-L-methionine per subunit.</text>
</comment>
<comment type="pathway">
    <text evidence="7 8">Amino-acid biosynthesis; L-pyrrolysine biosynthesis.</text>
</comment>
<comment type="similarity">
    <text evidence="6">Belongs to the radical SAM superfamily. PylB family.</text>
</comment>
<organism>
    <name type="scientific">Methanosarcina barkeri (strain Fusaro / DSM 804)</name>
    <dbReference type="NCBI Taxonomy" id="269797"/>
    <lineage>
        <taxon>Archaea</taxon>
        <taxon>Methanobacteriati</taxon>
        <taxon>Methanobacteriota</taxon>
        <taxon>Stenosarchaea group</taxon>
        <taxon>Methanomicrobia</taxon>
        <taxon>Methanosarcinales</taxon>
        <taxon>Methanosarcinaceae</taxon>
        <taxon>Methanosarcina</taxon>
    </lineage>
</organism>
<evidence type="ECO:0000255" key="1">
    <source>
        <dbReference type="PROSITE-ProRule" id="PRU01266"/>
    </source>
</evidence>
<evidence type="ECO:0000269" key="2">
    <source>
    </source>
</evidence>
<evidence type="ECO:0000269" key="3">
    <source>
    </source>
</evidence>
<evidence type="ECO:0000303" key="4">
    <source>
    </source>
</evidence>
<evidence type="ECO:0000303" key="5">
    <source>
    </source>
</evidence>
<evidence type="ECO:0000305" key="6"/>
<evidence type="ECO:0000305" key="7">
    <source>
    </source>
</evidence>
<evidence type="ECO:0000305" key="8">
    <source>
    </source>
</evidence>
<evidence type="ECO:0000305" key="9">
    <source>
    </source>
</evidence>
<evidence type="ECO:0007744" key="10">
    <source>
        <dbReference type="PDB" id="3T7V"/>
    </source>
</evidence>
<evidence type="ECO:0007829" key="11">
    <source>
        <dbReference type="PDB" id="3T7V"/>
    </source>
</evidence>
<dbReference type="EC" id="5.4.99.58" evidence="3"/>
<dbReference type="EMBL" id="CP000099">
    <property type="protein sequence ID" value="AAZ69814.1"/>
    <property type="molecule type" value="Genomic_DNA"/>
</dbReference>
<dbReference type="PDB" id="3T7V">
    <property type="method" value="X-ray"/>
    <property type="resolution" value="1.50 A"/>
    <property type="chains" value="A=1-350"/>
</dbReference>
<dbReference type="PDBsum" id="3T7V"/>
<dbReference type="SMR" id="Q46E78"/>
<dbReference type="STRING" id="269797.Mbar_A0838"/>
<dbReference type="PaxDb" id="269797-Mbar_A0838"/>
<dbReference type="KEGG" id="mba:Mbar_A0838"/>
<dbReference type="eggNOG" id="arCOG00658">
    <property type="taxonomic scope" value="Archaea"/>
</dbReference>
<dbReference type="HOGENOM" id="CLU_033172_0_0_2"/>
<dbReference type="OrthoDB" id="61910at2157"/>
<dbReference type="BioCyc" id="MetaCyc:MONOMER-17153"/>
<dbReference type="BRENDA" id="5.4.99.58">
    <property type="organism ID" value="3250"/>
</dbReference>
<dbReference type="UniPathway" id="UPA01028"/>
<dbReference type="EvolutionaryTrace" id="Q46E78"/>
<dbReference type="GO" id="GO:0051539">
    <property type="term" value="F:4 iron, 4 sulfur cluster binding"/>
    <property type="evidence" value="ECO:0000314"/>
    <property type="project" value="UniProtKB"/>
</dbReference>
<dbReference type="GO" id="GO:0016866">
    <property type="term" value="F:intramolecular transferase activity"/>
    <property type="evidence" value="ECO:0000314"/>
    <property type="project" value="UniProtKB"/>
</dbReference>
<dbReference type="GO" id="GO:0046872">
    <property type="term" value="F:metal ion binding"/>
    <property type="evidence" value="ECO:0007669"/>
    <property type="project" value="UniProtKB-KW"/>
</dbReference>
<dbReference type="GO" id="GO:0016740">
    <property type="term" value="F:transferase activity"/>
    <property type="evidence" value="ECO:0007669"/>
    <property type="project" value="TreeGrafter"/>
</dbReference>
<dbReference type="GO" id="GO:0071524">
    <property type="term" value="P:pyrrolysine biosynthetic process"/>
    <property type="evidence" value="ECO:0000314"/>
    <property type="project" value="UniProtKB"/>
</dbReference>
<dbReference type="CDD" id="cd01335">
    <property type="entry name" value="Radical_SAM"/>
    <property type="match status" value="1"/>
</dbReference>
<dbReference type="FunFam" id="3.20.20.70:FF:000404">
    <property type="entry name" value="Proline 2-methylase for pyrrolysine biosynthesis"/>
    <property type="match status" value="1"/>
</dbReference>
<dbReference type="Gene3D" id="3.20.20.70">
    <property type="entry name" value="Aldolase class I"/>
    <property type="match status" value="1"/>
</dbReference>
<dbReference type="InterPro" id="IPR013785">
    <property type="entry name" value="Aldolase_TIM"/>
</dbReference>
<dbReference type="InterPro" id="IPR006638">
    <property type="entry name" value="Elp3/MiaA/NifB-like_rSAM"/>
</dbReference>
<dbReference type="InterPro" id="IPR034422">
    <property type="entry name" value="HydE/PylB-like"/>
</dbReference>
<dbReference type="InterPro" id="IPR023891">
    <property type="entry name" value="Pyrrolys_PylB"/>
</dbReference>
<dbReference type="InterPro" id="IPR007197">
    <property type="entry name" value="rSAM"/>
</dbReference>
<dbReference type="NCBIfam" id="TIGR03910">
    <property type="entry name" value="pyrrolys_PylB"/>
    <property type="match status" value="1"/>
</dbReference>
<dbReference type="PANTHER" id="PTHR43726">
    <property type="entry name" value="3-METHYLORNITHINE SYNTHASE"/>
    <property type="match status" value="1"/>
</dbReference>
<dbReference type="PANTHER" id="PTHR43726:SF1">
    <property type="entry name" value="BIOTIN SYNTHASE"/>
    <property type="match status" value="1"/>
</dbReference>
<dbReference type="Pfam" id="PF04055">
    <property type="entry name" value="Radical_SAM"/>
    <property type="match status" value="1"/>
</dbReference>
<dbReference type="PIRSF" id="PIRSF004762">
    <property type="entry name" value="CHP00423"/>
    <property type="match status" value="1"/>
</dbReference>
<dbReference type="SFLD" id="SFLDF00349">
    <property type="entry name" value="3-methylornithine_synthase_(Py"/>
    <property type="match status" value="1"/>
</dbReference>
<dbReference type="SFLD" id="SFLDG01280">
    <property type="entry name" value="HydE/PylB-like"/>
    <property type="match status" value="1"/>
</dbReference>
<dbReference type="SMART" id="SM00729">
    <property type="entry name" value="Elp3"/>
    <property type="match status" value="1"/>
</dbReference>
<dbReference type="SUPFAM" id="SSF102114">
    <property type="entry name" value="Radical SAM enzymes"/>
    <property type="match status" value="1"/>
</dbReference>
<dbReference type="PROSITE" id="PS51918">
    <property type="entry name" value="RADICAL_SAM"/>
    <property type="match status" value="1"/>
</dbReference>
<gene>
    <name evidence="4" type="primary">pylB</name>
    <name type="ordered locus">Mbar_A0838</name>
</gene>
<name>PYLB_METBF</name>
<protein>
    <recommendedName>
        <fullName evidence="5">3-methylornithine synthase</fullName>
        <ecNumber evidence="3">5.4.99.58</ecNumber>
    </recommendedName>
    <alternativeName>
        <fullName>(2R,3R)-3-methylornithine synthase</fullName>
    </alternativeName>
    <alternativeName>
        <fullName>(3R)-3-methyl-D-ornithine synthase</fullName>
    </alternativeName>
    <alternativeName>
        <fullName>Pyrrolysine biosynthesis protein PylB</fullName>
    </alternativeName>
</protein>
<proteinExistence type="evidence at protein level"/>
<reference key="1">
    <citation type="journal article" date="2006" name="J. Bacteriol.">
        <title>The Methanosarcina barkeri genome: comparative analysis with Methanosarcina acetivorans and Methanosarcina mazei reveals extensive rearrangement within methanosarcinal genomes.</title>
        <authorList>
            <person name="Maeder D.L."/>
            <person name="Anderson I."/>
            <person name="Brettin T.S."/>
            <person name="Bruce D.C."/>
            <person name="Gilna P."/>
            <person name="Han C.S."/>
            <person name="Lapidus A."/>
            <person name="Metcalf W.W."/>
            <person name="Saunders E."/>
            <person name="Tapia R."/>
            <person name="Sowers K.R."/>
        </authorList>
    </citation>
    <scope>NUCLEOTIDE SEQUENCE [LARGE SCALE GENOMIC DNA]</scope>
    <source>
        <strain>Fusaro / DSM 804</strain>
    </source>
</reference>
<reference key="2">
    <citation type="journal article" date="2011" name="Nature">
        <title>The complete biosynthesis of the genetically encoded amino acid pyrrolysine from lysine.</title>
        <authorList>
            <person name="Gaston M.A."/>
            <person name="Zhang L."/>
            <person name="Green-Church K.B."/>
            <person name="Krzycki J.A."/>
        </authorList>
    </citation>
    <scope>FUNCTION</scope>
    <scope>PATHWAY</scope>
</reference>
<reference key="3">
    <citation type="journal article" date="2024" name="J. Am. Chem. Soc.">
        <title>Radical S-Adenosyl-l-Methionine Enzyme PylB: A C-Centered Radical to Convert L-Lysine into (3R)-3-Methyl-D-Ornithine.</title>
        <authorList>
            <person name="Soualmia F."/>
            <person name="Cherrier M.V."/>
            <person name="Chauvire T."/>
            <person name="Mauger M."/>
            <person name="Tatham P."/>
            <person name="Guillot A."/>
            <person name="Guinchard X."/>
            <person name="Martin L."/>
            <person name="Amara P."/>
            <person name="Mouesca J.M."/>
            <person name="Daghmoum M."/>
            <person name="Benjdia A."/>
            <person name="Gambarelli S."/>
            <person name="Berteau O."/>
            <person name="Nicolet Y."/>
        </authorList>
    </citation>
    <scope>FUNCTION</scope>
    <scope>CATALYTIC ACTIVITY</scope>
    <scope>COFACTOR</scope>
    <scope>REACTION MECHANISM</scope>
    <source>
        <strain>Fusaro / DSM 804</strain>
    </source>
</reference>
<reference evidence="10" key="4">
    <citation type="journal article" date="2012" name="Angew. Chem. Int. Ed.">
        <title>Crystal structure of methylornithine synthase (PylB): insights into the pyrrolysine biosynthesis.</title>
        <authorList>
            <person name="Quitterer F."/>
            <person name="List A."/>
            <person name="Eisenreich W."/>
            <person name="Bacher A."/>
            <person name="Groll M."/>
        </authorList>
    </citation>
    <scope>X-RAY CRYSTALLOGRAPHY (1.50 ANGSTROMS) IN COMPLEX WITH 4FE-4S CLUSTER; S-ADENOSYL-L-METHIONINE AND REACTION PRODUCT 3-METHYL-D-ORNITHINE</scope>
    <scope>FUNCTION</scope>
    <scope>COFACTOR</scope>
    <scope>PATHWAY</scope>
    <source>
        <strain>Fusaro / DSM 804</strain>
    </source>
</reference>
<accession>Q46E78</accession>
<keyword id="KW-0002">3D-structure</keyword>
<keyword id="KW-0004">4Fe-4S</keyword>
<keyword id="KW-0028">Amino-acid biosynthesis</keyword>
<keyword id="KW-0408">Iron</keyword>
<keyword id="KW-0411">Iron-sulfur</keyword>
<keyword id="KW-0413">Isomerase</keyword>
<keyword id="KW-0479">Metal-binding</keyword>
<keyword id="KW-0949">S-adenosyl-L-methionine</keyword>
<sequence>MIQKMALDEFDSLGDKVIEGYQLTDNDLRTLLSLESKEGLERLYSAARKVRDHYFGNRVFLNCFIYFSTYCKNQCSFCYYNCRNEINRYRLTMEEIKETCKTLKGAGFHMVDLTMGEDPYYYEDPNRFVELVQIVKEELGLPIMISPGLMDNATLLKAREKGANFLALYQETYDTELYRKLRVGQSFDGRVNARRFAKQQGYCVEDGILTGVGNDIESTILSLRGMSTNDPDMVRVMTFLPQEGTPLEGFRDKSNLSELKIISVLRLMFPKRLIPASLDLEGIDGMVLRLNAGANIVTSILPPDSQLEGVANYDRDLEERDRDIKSVVRRLEIMGMKPARQADFEAVLGC</sequence>